<organism>
    <name type="scientific">Ruegeria sp. (strain TM1040)</name>
    <name type="common">Silicibacter sp.</name>
    <dbReference type="NCBI Taxonomy" id="292414"/>
    <lineage>
        <taxon>Bacteria</taxon>
        <taxon>Pseudomonadati</taxon>
        <taxon>Pseudomonadota</taxon>
        <taxon>Alphaproteobacteria</taxon>
        <taxon>Rhodobacterales</taxon>
        <taxon>Roseobacteraceae</taxon>
        <taxon>Ruegeria</taxon>
    </lineage>
</organism>
<accession>Q1GFW2</accession>
<name>SYT_RUEST</name>
<protein>
    <recommendedName>
        <fullName evidence="1">Threonine--tRNA ligase</fullName>
        <ecNumber evidence="1">6.1.1.3</ecNumber>
    </recommendedName>
    <alternativeName>
        <fullName evidence="1">Threonyl-tRNA synthetase</fullName>
        <shortName evidence="1">ThrRS</shortName>
    </alternativeName>
</protein>
<feature type="chain" id="PRO_1000020515" description="Threonine--tRNA ligase">
    <location>
        <begin position="1"/>
        <end position="648"/>
    </location>
</feature>
<feature type="domain" description="TGS" evidence="2">
    <location>
        <begin position="1"/>
        <end position="63"/>
    </location>
</feature>
<feature type="region of interest" description="Catalytic" evidence="1">
    <location>
        <begin position="247"/>
        <end position="544"/>
    </location>
</feature>
<feature type="binding site" evidence="1">
    <location>
        <position position="344"/>
    </location>
    <ligand>
        <name>Zn(2+)</name>
        <dbReference type="ChEBI" id="CHEBI:29105"/>
    </ligand>
</feature>
<feature type="binding site" evidence="1">
    <location>
        <position position="395"/>
    </location>
    <ligand>
        <name>Zn(2+)</name>
        <dbReference type="ChEBI" id="CHEBI:29105"/>
    </ligand>
</feature>
<feature type="binding site" evidence="1">
    <location>
        <position position="521"/>
    </location>
    <ligand>
        <name>Zn(2+)</name>
        <dbReference type="ChEBI" id="CHEBI:29105"/>
    </ligand>
</feature>
<comment type="function">
    <text evidence="1">Catalyzes the attachment of threonine to tRNA(Thr) in a two-step reaction: L-threonine is first activated by ATP to form Thr-AMP and then transferred to the acceptor end of tRNA(Thr). Also edits incorrectly charged L-seryl-tRNA(Thr).</text>
</comment>
<comment type="catalytic activity">
    <reaction evidence="1">
        <text>tRNA(Thr) + L-threonine + ATP = L-threonyl-tRNA(Thr) + AMP + diphosphate + H(+)</text>
        <dbReference type="Rhea" id="RHEA:24624"/>
        <dbReference type="Rhea" id="RHEA-COMP:9670"/>
        <dbReference type="Rhea" id="RHEA-COMP:9704"/>
        <dbReference type="ChEBI" id="CHEBI:15378"/>
        <dbReference type="ChEBI" id="CHEBI:30616"/>
        <dbReference type="ChEBI" id="CHEBI:33019"/>
        <dbReference type="ChEBI" id="CHEBI:57926"/>
        <dbReference type="ChEBI" id="CHEBI:78442"/>
        <dbReference type="ChEBI" id="CHEBI:78534"/>
        <dbReference type="ChEBI" id="CHEBI:456215"/>
        <dbReference type="EC" id="6.1.1.3"/>
    </reaction>
</comment>
<comment type="cofactor">
    <cofactor evidence="1">
        <name>Zn(2+)</name>
        <dbReference type="ChEBI" id="CHEBI:29105"/>
    </cofactor>
    <text evidence="1">Binds 1 zinc ion per subunit.</text>
</comment>
<comment type="subunit">
    <text evidence="1">Homodimer.</text>
</comment>
<comment type="subcellular location">
    <subcellularLocation>
        <location evidence="1">Cytoplasm</location>
    </subcellularLocation>
</comment>
<comment type="similarity">
    <text evidence="1">Belongs to the class-II aminoacyl-tRNA synthetase family.</text>
</comment>
<proteinExistence type="inferred from homology"/>
<reference key="1">
    <citation type="submission" date="2006-05" db="EMBL/GenBank/DDBJ databases">
        <title>Complete sequence of chromosome of Silicibacter sp. TM1040.</title>
        <authorList>
            <consortium name="US DOE Joint Genome Institute"/>
            <person name="Copeland A."/>
            <person name="Lucas S."/>
            <person name="Lapidus A."/>
            <person name="Barry K."/>
            <person name="Detter J.C."/>
            <person name="Glavina del Rio T."/>
            <person name="Hammon N."/>
            <person name="Israni S."/>
            <person name="Dalin E."/>
            <person name="Tice H."/>
            <person name="Pitluck S."/>
            <person name="Brettin T."/>
            <person name="Bruce D."/>
            <person name="Han C."/>
            <person name="Tapia R."/>
            <person name="Goodwin L."/>
            <person name="Thompson L.S."/>
            <person name="Gilna P."/>
            <person name="Schmutz J."/>
            <person name="Larimer F."/>
            <person name="Land M."/>
            <person name="Hauser L."/>
            <person name="Kyrpides N."/>
            <person name="Kim E."/>
            <person name="Belas R."/>
            <person name="Moran M.A."/>
            <person name="Buchan A."/>
            <person name="Gonzalez J.M."/>
            <person name="Schell M.A."/>
            <person name="Sun F."/>
            <person name="Richardson P."/>
        </authorList>
    </citation>
    <scope>NUCLEOTIDE SEQUENCE [LARGE SCALE GENOMIC DNA]</scope>
    <source>
        <strain>TM1040</strain>
    </source>
</reference>
<dbReference type="EC" id="6.1.1.3" evidence="1"/>
<dbReference type="EMBL" id="CP000377">
    <property type="protein sequence ID" value="ABF64454.1"/>
    <property type="molecule type" value="Genomic_DNA"/>
</dbReference>
<dbReference type="RefSeq" id="WP_011539049.1">
    <property type="nucleotide sequence ID" value="NC_008044.1"/>
</dbReference>
<dbReference type="SMR" id="Q1GFW2"/>
<dbReference type="STRING" id="292414.TM1040_1721"/>
<dbReference type="KEGG" id="sit:TM1040_1721"/>
<dbReference type="eggNOG" id="COG0441">
    <property type="taxonomic scope" value="Bacteria"/>
</dbReference>
<dbReference type="HOGENOM" id="CLU_008554_0_1_5"/>
<dbReference type="OrthoDB" id="9802304at2"/>
<dbReference type="Proteomes" id="UP000000636">
    <property type="component" value="Chromosome"/>
</dbReference>
<dbReference type="GO" id="GO:0005737">
    <property type="term" value="C:cytoplasm"/>
    <property type="evidence" value="ECO:0007669"/>
    <property type="project" value="UniProtKB-SubCell"/>
</dbReference>
<dbReference type="GO" id="GO:0005524">
    <property type="term" value="F:ATP binding"/>
    <property type="evidence" value="ECO:0007669"/>
    <property type="project" value="UniProtKB-UniRule"/>
</dbReference>
<dbReference type="GO" id="GO:0046872">
    <property type="term" value="F:metal ion binding"/>
    <property type="evidence" value="ECO:0007669"/>
    <property type="project" value="UniProtKB-KW"/>
</dbReference>
<dbReference type="GO" id="GO:0004829">
    <property type="term" value="F:threonine-tRNA ligase activity"/>
    <property type="evidence" value="ECO:0007669"/>
    <property type="project" value="UniProtKB-UniRule"/>
</dbReference>
<dbReference type="GO" id="GO:0000049">
    <property type="term" value="F:tRNA binding"/>
    <property type="evidence" value="ECO:0007669"/>
    <property type="project" value="UniProtKB-KW"/>
</dbReference>
<dbReference type="GO" id="GO:0006435">
    <property type="term" value="P:threonyl-tRNA aminoacylation"/>
    <property type="evidence" value="ECO:0007669"/>
    <property type="project" value="UniProtKB-UniRule"/>
</dbReference>
<dbReference type="CDD" id="cd01667">
    <property type="entry name" value="TGS_ThrRS"/>
    <property type="match status" value="1"/>
</dbReference>
<dbReference type="CDD" id="cd00860">
    <property type="entry name" value="ThrRS_anticodon"/>
    <property type="match status" value="1"/>
</dbReference>
<dbReference type="CDD" id="cd00771">
    <property type="entry name" value="ThrRS_core"/>
    <property type="match status" value="1"/>
</dbReference>
<dbReference type="FunFam" id="3.30.54.20:FF:000002">
    <property type="entry name" value="Threonine--tRNA ligase"/>
    <property type="match status" value="1"/>
</dbReference>
<dbReference type="FunFam" id="3.30.930.10:FF:000002">
    <property type="entry name" value="Threonine--tRNA ligase"/>
    <property type="match status" value="1"/>
</dbReference>
<dbReference type="FunFam" id="3.40.50.800:FF:000001">
    <property type="entry name" value="Threonine--tRNA ligase"/>
    <property type="match status" value="1"/>
</dbReference>
<dbReference type="FunFam" id="3.30.980.10:FF:000005">
    <property type="entry name" value="Threonyl-tRNA synthetase, mitochondrial"/>
    <property type="match status" value="1"/>
</dbReference>
<dbReference type="Gene3D" id="3.10.20.30">
    <property type="match status" value="1"/>
</dbReference>
<dbReference type="Gene3D" id="3.30.54.20">
    <property type="match status" value="1"/>
</dbReference>
<dbReference type="Gene3D" id="3.40.50.800">
    <property type="entry name" value="Anticodon-binding domain"/>
    <property type="match status" value="1"/>
</dbReference>
<dbReference type="Gene3D" id="3.30.930.10">
    <property type="entry name" value="Bira Bifunctional Protein, Domain 2"/>
    <property type="match status" value="1"/>
</dbReference>
<dbReference type="Gene3D" id="3.30.980.10">
    <property type="entry name" value="Threonyl-trna Synthetase, Chain A, domain 2"/>
    <property type="match status" value="1"/>
</dbReference>
<dbReference type="HAMAP" id="MF_00184">
    <property type="entry name" value="Thr_tRNA_synth"/>
    <property type="match status" value="1"/>
</dbReference>
<dbReference type="InterPro" id="IPR002314">
    <property type="entry name" value="aa-tRNA-synt_IIb"/>
</dbReference>
<dbReference type="InterPro" id="IPR006195">
    <property type="entry name" value="aa-tRNA-synth_II"/>
</dbReference>
<dbReference type="InterPro" id="IPR045864">
    <property type="entry name" value="aa-tRNA-synth_II/BPL/LPL"/>
</dbReference>
<dbReference type="InterPro" id="IPR004154">
    <property type="entry name" value="Anticodon-bd"/>
</dbReference>
<dbReference type="InterPro" id="IPR036621">
    <property type="entry name" value="Anticodon-bd_dom_sf"/>
</dbReference>
<dbReference type="InterPro" id="IPR012675">
    <property type="entry name" value="Beta-grasp_dom_sf"/>
</dbReference>
<dbReference type="InterPro" id="IPR004095">
    <property type="entry name" value="TGS"/>
</dbReference>
<dbReference type="InterPro" id="IPR012676">
    <property type="entry name" value="TGS-like"/>
</dbReference>
<dbReference type="InterPro" id="IPR002320">
    <property type="entry name" value="Thr-tRNA-ligase_IIa"/>
</dbReference>
<dbReference type="InterPro" id="IPR018163">
    <property type="entry name" value="Thr/Ala-tRNA-synth_IIc_edit"/>
</dbReference>
<dbReference type="InterPro" id="IPR047246">
    <property type="entry name" value="ThrRS_anticodon"/>
</dbReference>
<dbReference type="InterPro" id="IPR033728">
    <property type="entry name" value="ThrRS_core"/>
</dbReference>
<dbReference type="InterPro" id="IPR012947">
    <property type="entry name" value="tRNA_SAD"/>
</dbReference>
<dbReference type="NCBIfam" id="TIGR00418">
    <property type="entry name" value="thrS"/>
    <property type="match status" value="1"/>
</dbReference>
<dbReference type="PANTHER" id="PTHR11451:SF44">
    <property type="entry name" value="THREONINE--TRNA LIGASE, CHLOROPLASTIC_MITOCHONDRIAL 2"/>
    <property type="match status" value="1"/>
</dbReference>
<dbReference type="PANTHER" id="PTHR11451">
    <property type="entry name" value="THREONINE-TRNA LIGASE"/>
    <property type="match status" value="1"/>
</dbReference>
<dbReference type="Pfam" id="PF03129">
    <property type="entry name" value="HGTP_anticodon"/>
    <property type="match status" value="1"/>
</dbReference>
<dbReference type="Pfam" id="PF02824">
    <property type="entry name" value="TGS"/>
    <property type="match status" value="1"/>
</dbReference>
<dbReference type="Pfam" id="PF00587">
    <property type="entry name" value="tRNA-synt_2b"/>
    <property type="match status" value="1"/>
</dbReference>
<dbReference type="Pfam" id="PF07973">
    <property type="entry name" value="tRNA_SAD"/>
    <property type="match status" value="1"/>
</dbReference>
<dbReference type="PRINTS" id="PR01047">
    <property type="entry name" value="TRNASYNTHTHR"/>
</dbReference>
<dbReference type="SMART" id="SM00863">
    <property type="entry name" value="tRNA_SAD"/>
    <property type="match status" value="1"/>
</dbReference>
<dbReference type="SUPFAM" id="SSF52954">
    <property type="entry name" value="Class II aaRS ABD-related"/>
    <property type="match status" value="1"/>
</dbReference>
<dbReference type="SUPFAM" id="SSF55681">
    <property type="entry name" value="Class II aaRS and biotin synthetases"/>
    <property type="match status" value="1"/>
</dbReference>
<dbReference type="SUPFAM" id="SSF81271">
    <property type="entry name" value="TGS-like"/>
    <property type="match status" value="1"/>
</dbReference>
<dbReference type="SUPFAM" id="SSF55186">
    <property type="entry name" value="ThrRS/AlaRS common domain"/>
    <property type="match status" value="1"/>
</dbReference>
<dbReference type="PROSITE" id="PS50862">
    <property type="entry name" value="AA_TRNA_LIGASE_II"/>
    <property type="match status" value="1"/>
</dbReference>
<dbReference type="PROSITE" id="PS51880">
    <property type="entry name" value="TGS"/>
    <property type="match status" value="1"/>
</dbReference>
<gene>
    <name evidence="1" type="primary">thrS</name>
    <name type="ordered locus">TM1040_1721</name>
</gene>
<sequence length="648" mass="73771">MAQISLTFPDGNARSYDAGITPAEVAADISTSLAKKAISATVDGQHWDLQWPVTQDAAIAIHTMKDEAQANELIRHDLAHIMARAVQEIWPDTKVTIGPVIENGWYYDFDRAEPFTPEDLGTIEKKMKEIINKREPVTTEVWEREKAIQYYTDNNEPYKVELIDSIPGDEPLRMYWHGDWQDLCRGPHLQHTGQVPGDAFKLMSIAGAYWRGDSDRQMLQRIYGVAFTGKEKLKAHLTMLEEAAKRDHRKLGREMNLFHMQEEAPGQVFWHPNGWRIYTTLQDYMRRMQDRDGYVEVNTPQVVDRKLWEKSGHWDKYQENMFIVEVDEDHAREKAVNALKPMNCPCHVQVFNQGLKSYRDLPLRMAEFGSCARYEPSGALHGIMRVRGFTQDDGHIFCTEDQITSETAKFIAFLSKVYADLGFDNWTIKLSTRPEQRIGSDETWDNMEQALGDACKAAGYDYEILEGEGAFYGPKLEFTLTDAIGRNWQCGTLQVDANLPERLEASFIGQDGSKHRPVMLHRATLGSFERFIGILIEEHAGKLPFWLAPRQVVVASITSEADDYVNEVVETLRAAGVRAEADTRNEKINYKVREHSVGKVPVILAVGHREVEERTVSVRRLGEKQTKVESLTNVTEELAKAATPPDLL</sequence>
<keyword id="KW-0030">Aminoacyl-tRNA synthetase</keyword>
<keyword id="KW-0067">ATP-binding</keyword>
<keyword id="KW-0963">Cytoplasm</keyword>
<keyword id="KW-0436">Ligase</keyword>
<keyword id="KW-0479">Metal-binding</keyword>
<keyword id="KW-0547">Nucleotide-binding</keyword>
<keyword id="KW-0648">Protein biosynthesis</keyword>
<keyword id="KW-1185">Reference proteome</keyword>
<keyword id="KW-0694">RNA-binding</keyword>
<keyword id="KW-0820">tRNA-binding</keyword>
<keyword id="KW-0862">Zinc</keyword>
<evidence type="ECO:0000255" key="1">
    <source>
        <dbReference type="HAMAP-Rule" id="MF_00184"/>
    </source>
</evidence>
<evidence type="ECO:0000255" key="2">
    <source>
        <dbReference type="PROSITE-ProRule" id="PRU01228"/>
    </source>
</evidence>